<proteinExistence type="inferred from homology"/>
<reference key="1">
    <citation type="journal article" date="2010" name="BMC Genomics">
        <title>A genomic perspective on the potential of Actinobacillus succinogenes for industrial succinate production.</title>
        <authorList>
            <person name="McKinlay J.B."/>
            <person name="Laivenieks M."/>
            <person name="Schindler B.D."/>
            <person name="McKinlay A.A."/>
            <person name="Siddaramappa S."/>
            <person name="Challacombe J.F."/>
            <person name="Lowry S.R."/>
            <person name="Clum A."/>
            <person name="Lapidus A.L."/>
            <person name="Burkhart K.B."/>
            <person name="Harkins V."/>
            <person name="Vieille C."/>
        </authorList>
    </citation>
    <scope>NUCLEOTIDE SEQUENCE [LARGE SCALE GENOMIC DNA]</scope>
    <source>
        <strain>ATCC 55618 / DSM 22257 / CCUG 43843 / 130Z</strain>
    </source>
</reference>
<gene>
    <name evidence="1" type="primary">acpP</name>
    <name type="ordered locus">Asuc_2000</name>
</gene>
<keyword id="KW-0963">Cytoplasm</keyword>
<keyword id="KW-0275">Fatty acid biosynthesis</keyword>
<keyword id="KW-0276">Fatty acid metabolism</keyword>
<keyword id="KW-0444">Lipid biosynthesis</keyword>
<keyword id="KW-0443">Lipid metabolism</keyword>
<keyword id="KW-0596">Phosphopantetheine</keyword>
<keyword id="KW-0597">Phosphoprotein</keyword>
<keyword id="KW-1185">Reference proteome</keyword>
<comment type="function">
    <text evidence="1">Carrier of the growing fatty acid chain in fatty acid biosynthesis.</text>
</comment>
<comment type="pathway">
    <text evidence="1">Lipid metabolism; fatty acid biosynthesis.</text>
</comment>
<comment type="subcellular location">
    <subcellularLocation>
        <location evidence="1">Cytoplasm</location>
    </subcellularLocation>
</comment>
<comment type="PTM">
    <text evidence="1">4'-phosphopantetheine is transferred from CoA to a specific serine of apo-ACP by AcpS. This modification is essential for activity because fatty acids are bound in thioester linkage to the sulfhydryl of the prosthetic group.</text>
</comment>
<comment type="similarity">
    <text evidence="1">Belongs to the acyl carrier protein (ACP) family.</text>
</comment>
<organism>
    <name type="scientific">Actinobacillus succinogenes (strain ATCC 55618 / DSM 22257 / CCUG 43843 / 130Z)</name>
    <dbReference type="NCBI Taxonomy" id="339671"/>
    <lineage>
        <taxon>Bacteria</taxon>
        <taxon>Pseudomonadati</taxon>
        <taxon>Pseudomonadota</taxon>
        <taxon>Gammaproteobacteria</taxon>
        <taxon>Pasteurellales</taxon>
        <taxon>Pasteurellaceae</taxon>
        <taxon>Actinobacillus</taxon>
    </lineage>
</organism>
<name>ACP_ACTSZ</name>
<accession>A6VQU9</accession>
<feature type="chain" id="PRO_1000073118" description="Acyl carrier protein">
    <location>
        <begin position="1"/>
        <end position="76"/>
    </location>
</feature>
<feature type="domain" description="Carrier" evidence="2">
    <location>
        <begin position="1"/>
        <end position="76"/>
    </location>
</feature>
<feature type="modified residue" description="O-(pantetheine 4'-phosphoryl)serine" evidence="2">
    <location>
        <position position="36"/>
    </location>
</feature>
<dbReference type="EMBL" id="CP000746">
    <property type="protein sequence ID" value="ABR75346.1"/>
    <property type="molecule type" value="Genomic_DNA"/>
</dbReference>
<dbReference type="RefSeq" id="WP_012073723.1">
    <property type="nucleotide sequence ID" value="NC_009655.1"/>
</dbReference>
<dbReference type="SMR" id="A6VQU9"/>
<dbReference type="STRING" id="339671.Asuc_2000"/>
<dbReference type="KEGG" id="asu:Asuc_2000"/>
<dbReference type="eggNOG" id="COG0236">
    <property type="taxonomic scope" value="Bacteria"/>
</dbReference>
<dbReference type="HOGENOM" id="CLU_108696_5_1_6"/>
<dbReference type="UniPathway" id="UPA00094"/>
<dbReference type="Proteomes" id="UP000001114">
    <property type="component" value="Chromosome"/>
</dbReference>
<dbReference type="GO" id="GO:0005829">
    <property type="term" value="C:cytosol"/>
    <property type="evidence" value="ECO:0007669"/>
    <property type="project" value="TreeGrafter"/>
</dbReference>
<dbReference type="GO" id="GO:0016020">
    <property type="term" value="C:membrane"/>
    <property type="evidence" value="ECO:0007669"/>
    <property type="project" value="GOC"/>
</dbReference>
<dbReference type="GO" id="GO:0000035">
    <property type="term" value="F:acyl binding"/>
    <property type="evidence" value="ECO:0007669"/>
    <property type="project" value="TreeGrafter"/>
</dbReference>
<dbReference type="GO" id="GO:0000036">
    <property type="term" value="F:acyl carrier activity"/>
    <property type="evidence" value="ECO:0007669"/>
    <property type="project" value="UniProtKB-UniRule"/>
</dbReference>
<dbReference type="GO" id="GO:0009245">
    <property type="term" value="P:lipid A biosynthetic process"/>
    <property type="evidence" value="ECO:0007669"/>
    <property type="project" value="TreeGrafter"/>
</dbReference>
<dbReference type="FunFam" id="1.10.1200.10:FF:000001">
    <property type="entry name" value="Acyl carrier protein"/>
    <property type="match status" value="1"/>
</dbReference>
<dbReference type="Gene3D" id="1.10.1200.10">
    <property type="entry name" value="ACP-like"/>
    <property type="match status" value="1"/>
</dbReference>
<dbReference type="HAMAP" id="MF_01217">
    <property type="entry name" value="Acyl_carrier"/>
    <property type="match status" value="1"/>
</dbReference>
<dbReference type="InterPro" id="IPR003231">
    <property type="entry name" value="ACP"/>
</dbReference>
<dbReference type="InterPro" id="IPR036736">
    <property type="entry name" value="ACP-like_sf"/>
</dbReference>
<dbReference type="InterPro" id="IPR009081">
    <property type="entry name" value="PP-bd_ACP"/>
</dbReference>
<dbReference type="InterPro" id="IPR006162">
    <property type="entry name" value="Ppantetheine_attach_site"/>
</dbReference>
<dbReference type="NCBIfam" id="TIGR00517">
    <property type="entry name" value="acyl_carrier"/>
    <property type="match status" value="1"/>
</dbReference>
<dbReference type="NCBIfam" id="NF002148">
    <property type="entry name" value="PRK00982.1-2"/>
    <property type="match status" value="1"/>
</dbReference>
<dbReference type="NCBIfam" id="NF002149">
    <property type="entry name" value="PRK00982.1-3"/>
    <property type="match status" value="1"/>
</dbReference>
<dbReference type="NCBIfam" id="NF002150">
    <property type="entry name" value="PRK00982.1-4"/>
    <property type="match status" value="1"/>
</dbReference>
<dbReference type="NCBIfam" id="NF002151">
    <property type="entry name" value="PRK00982.1-5"/>
    <property type="match status" value="1"/>
</dbReference>
<dbReference type="PANTHER" id="PTHR20863">
    <property type="entry name" value="ACYL CARRIER PROTEIN"/>
    <property type="match status" value="1"/>
</dbReference>
<dbReference type="PANTHER" id="PTHR20863:SF76">
    <property type="entry name" value="CARRIER DOMAIN-CONTAINING PROTEIN"/>
    <property type="match status" value="1"/>
</dbReference>
<dbReference type="Pfam" id="PF00550">
    <property type="entry name" value="PP-binding"/>
    <property type="match status" value="1"/>
</dbReference>
<dbReference type="SUPFAM" id="SSF47336">
    <property type="entry name" value="ACP-like"/>
    <property type="match status" value="1"/>
</dbReference>
<dbReference type="PROSITE" id="PS50075">
    <property type="entry name" value="CARRIER"/>
    <property type="match status" value="1"/>
</dbReference>
<dbReference type="PROSITE" id="PS00012">
    <property type="entry name" value="PHOSPHOPANTETHEINE"/>
    <property type="match status" value="1"/>
</dbReference>
<protein>
    <recommendedName>
        <fullName evidence="1">Acyl carrier protein</fullName>
        <shortName evidence="1">ACP</shortName>
    </recommendedName>
</protein>
<sequence>MSIEERVKKIIVEQLGVKEEEVKSESSFIEDLGADSLDTVELVMALEEEFDIEIPDEEAEKITTVQSAIDYVQNNQ</sequence>
<evidence type="ECO:0000255" key="1">
    <source>
        <dbReference type="HAMAP-Rule" id="MF_01217"/>
    </source>
</evidence>
<evidence type="ECO:0000255" key="2">
    <source>
        <dbReference type="PROSITE-ProRule" id="PRU00258"/>
    </source>
</evidence>